<name>IF1_BACAH</name>
<dbReference type="EMBL" id="CP000485">
    <property type="protein sequence ID" value="ABK83546.1"/>
    <property type="molecule type" value="Genomic_DNA"/>
</dbReference>
<dbReference type="RefSeq" id="WP_001029884.1">
    <property type="nucleotide sequence ID" value="NC_008600.1"/>
</dbReference>
<dbReference type="SMR" id="A0R8K3"/>
<dbReference type="GeneID" id="93010920"/>
<dbReference type="KEGG" id="btl:BALH_0131"/>
<dbReference type="HOGENOM" id="CLU_151267_1_0_9"/>
<dbReference type="GO" id="GO:0005829">
    <property type="term" value="C:cytosol"/>
    <property type="evidence" value="ECO:0007669"/>
    <property type="project" value="TreeGrafter"/>
</dbReference>
<dbReference type="GO" id="GO:0043022">
    <property type="term" value="F:ribosome binding"/>
    <property type="evidence" value="ECO:0007669"/>
    <property type="project" value="UniProtKB-UniRule"/>
</dbReference>
<dbReference type="GO" id="GO:0019843">
    <property type="term" value="F:rRNA binding"/>
    <property type="evidence" value="ECO:0007669"/>
    <property type="project" value="UniProtKB-UniRule"/>
</dbReference>
<dbReference type="GO" id="GO:0003743">
    <property type="term" value="F:translation initiation factor activity"/>
    <property type="evidence" value="ECO:0007669"/>
    <property type="project" value="UniProtKB-UniRule"/>
</dbReference>
<dbReference type="CDD" id="cd04451">
    <property type="entry name" value="S1_IF1"/>
    <property type="match status" value="1"/>
</dbReference>
<dbReference type="FunFam" id="2.40.50.140:FF:000002">
    <property type="entry name" value="Translation initiation factor IF-1"/>
    <property type="match status" value="1"/>
</dbReference>
<dbReference type="Gene3D" id="2.40.50.140">
    <property type="entry name" value="Nucleic acid-binding proteins"/>
    <property type="match status" value="1"/>
</dbReference>
<dbReference type="HAMAP" id="MF_00075">
    <property type="entry name" value="IF_1"/>
    <property type="match status" value="1"/>
</dbReference>
<dbReference type="InterPro" id="IPR012340">
    <property type="entry name" value="NA-bd_OB-fold"/>
</dbReference>
<dbReference type="InterPro" id="IPR006196">
    <property type="entry name" value="RNA-binding_domain_S1_IF1"/>
</dbReference>
<dbReference type="InterPro" id="IPR003029">
    <property type="entry name" value="S1_domain"/>
</dbReference>
<dbReference type="InterPro" id="IPR004368">
    <property type="entry name" value="TIF_IF1"/>
</dbReference>
<dbReference type="NCBIfam" id="TIGR00008">
    <property type="entry name" value="infA"/>
    <property type="match status" value="1"/>
</dbReference>
<dbReference type="PANTHER" id="PTHR33370">
    <property type="entry name" value="TRANSLATION INITIATION FACTOR IF-1, CHLOROPLASTIC"/>
    <property type="match status" value="1"/>
</dbReference>
<dbReference type="PANTHER" id="PTHR33370:SF1">
    <property type="entry name" value="TRANSLATION INITIATION FACTOR IF-1, CHLOROPLASTIC"/>
    <property type="match status" value="1"/>
</dbReference>
<dbReference type="Pfam" id="PF01176">
    <property type="entry name" value="eIF-1a"/>
    <property type="match status" value="1"/>
</dbReference>
<dbReference type="SMART" id="SM00316">
    <property type="entry name" value="S1"/>
    <property type="match status" value="1"/>
</dbReference>
<dbReference type="SUPFAM" id="SSF50249">
    <property type="entry name" value="Nucleic acid-binding proteins"/>
    <property type="match status" value="1"/>
</dbReference>
<dbReference type="PROSITE" id="PS50832">
    <property type="entry name" value="S1_IF1_TYPE"/>
    <property type="match status" value="1"/>
</dbReference>
<gene>
    <name evidence="1" type="primary">infA</name>
    <name type="ordered locus">BALH_0131</name>
</gene>
<comment type="function">
    <text evidence="1">One of the essential components for the initiation of protein synthesis. Stabilizes the binding of IF-2 and IF-3 on the 30S subunit to which N-formylmethionyl-tRNA(fMet) subsequently binds. Helps modulate mRNA selection, yielding the 30S pre-initiation complex (PIC). Upon addition of the 50S ribosomal subunit IF-1, IF-2 and IF-3 are released leaving the mature 70S translation initiation complex.</text>
</comment>
<comment type="subunit">
    <text evidence="1">Component of the 30S ribosomal translation pre-initiation complex which assembles on the 30S ribosome in the order IF-2 and IF-3, IF-1 and N-formylmethionyl-tRNA(fMet); mRNA recruitment can occur at any time during PIC assembly.</text>
</comment>
<comment type="subcellular location">
    <subcellularLocation>
        <location evidence="1">Cytoplasm</location>
    </subcellularLocation>
</comment>
<comment type="similarity">
    <text evidence="1">Belongs to the IF-1 family.</text>
</comment>
<keyword id="KW-0963">Cytoplasm</keyword>
<keyword id="KW-0396">Initiation factor</keyword>
<keyword id="KW-0597">Phosphoprotein</keyword>
<keyword id="KW-0648">Protein biosynthesis</keyword>
<keyword id="KW-0694">RNA-binding</keyword>
<keyword id="KW-0699">rRNA-binding</keyword>
<sequence length="72" mass="8186">MAKDDVIEVEGTVLETLPNAMFKVELENGHVVLAHVSGKIRMNFIRILPGDKVTVELSPYDLNRGRITYRFK</sequence>
<reference key="1">
    <citation type="journal article" date="2007" name="J. Bacteriol.">
        <title>The complete genome sequence of Bacillus thuringiensis Al Hakam.</title>
        <authorList>
            <person name="Challacombe J.F."/>
            <person name="Altherr M.R."/>
            <person name="Xie G."/>
            <person name="Bhotika S.S."/>
            <person name="Brown N."/>
            <person name="Bruce D."/>
            <person name="Campbell C.S."/>
            <person name="Campbell M.L."/>
            <person name="Chen J."/>
            <person name="Chertkov O."/>
            <person name="Cleland C."/>
            <person name="Dimitrijevic M."/>
            <person name="Doggett N.A."/>
            <person name="Fawcett J.J."/>
            <person name="Glavina T."/>
            <person name="Goodwin L.A."/>
            <person name="Green L.D."/>
            <person name="Han C.S."/>
            <person name="Hill K.K."/>
            <person name="Hitchcock P."/>
            <person name="Jackson P.J."/>
            <person name="Keim P."/>
            <person name="Kewalramani A.R."/>
            <person name="Longmire J."/>
            <person name="Lucas S."/>
            <person name="Malfatti S."/>
            <person name="Martinez D."/>
            <person name="McMurry K."/>
            <person name="Meincke L.J."/>
            <person name="Misra M."/>
            <person name="Moseman B.L."/>
            <person name="Mundt M."/>
            <person name="Munk A.C."/>
            <person name="Okinaka R.T."/>
            <person name="Parson-Quintana B."/>
            <person name="Reilly L.P."/>
            <person name="Richardson P."/>
            <person name="Robinson D.L."/>
            <person name="Saunders E."/>
            <person name="Tapia R."/>
            <person name="Tesmer J.G."/>
            <person name="Thayer N."/>
            <person name="Thompson L.S."/>
            <person name="Tice H."/>
            <person name="Ticknor L.O."/>
            <person name="Wills P.L."/>
            <person name="Gilna P."/>
            <person name="Brettin T.S."/>
        </authorList>
    </citation>
    <scope>NUCLEOTIDE SEQUENCE [LARGE SCALE GENOMIC DNA]</scope>
    <source>
        <strain>Al Hakam</strain>
    </source>
</reference>
<feature type="chain" id="PRO_0000338768" description="Translation initiation factor IF-1">
    <location>
        <begin position="1"/>
        <end position="72"/>
    </location>
</feature>
<feature type="domain" description="S1-like" evidence="1">
    <location>
        <begin position="1"/>
        <end position="72"/>
    </location>
</feature>
<feature type="modified residue" description="Phosphotyrosine" evidence="1">
    <location>
        <position position="60"/>
    </location>
</feature>
<protein>
    <recommendedName>
        <fullName evidence="1">Translation initiation factor IF-1</fullName>
    </recommendedName>
</protein>
<accession>A0R8K3</accession>
<organism>
    <name type="scientific">Bacillus thuringiensis (strain Al Hakam)</name>
    <dbReference type="NCBI Taxonomy" id="412694"/>
    <lineage>
        <taxon>Bacteria</taxon>
        <taxon>Bacillati</taxon>
        <taxon>Bacillota</taxon>
        <taxon>Bacilli</taxon>
        <taxon>Bacillales</taxon>
        <taxon>Bacillaceae</taxon>
        <taxon>Bacillus</taxon>
        <taxon>Bacillus cereus group</taxon>
    </lineage>
</organism>
<evidence type="ECO:0000255" key="1">
    <source>
        <dbReference type="HAMAP-Rule" id="MF_00075"/>
    </source>
</evidence>
<proteinExistence type="inferred from homology"/>